<feature type="chain" id="PRO_0000396455" description="Ubiquitin">
    <location>
        <begin position="1"/>
        <end position="76"/>
    </location>
</feature>
<feature type="chain" id="PRO_0000396456" description="Large ribosomal subunit protein eL40B">
    <location>
        <begin position="77"/>
        <end position="128"/>
    </location>
</feature>
<feature type="domain" description="Ubiquitin-like" evidence="2">
    <location>
        <begin position="1"/>
        <end position="76"/>
    </location>
</feature>
<feature type="cross-link" description="Glycyl lysine isopeptide (Gly-Lys) (interchain with K-? in acceptor proteins)">
    <location>
        <position position="76"/>
    </location>
</feature>
<feature type="cross-link" description="Glycyl lysine isopeptide (Lys-Gly) (interchain with G-Cter in ubiquitin)" evidence="13">
    <location>
        <position position="93"/>
    </location>
</feature>
<feature type="mutagenesis site" description="Deficiency in ubiquitin-protein conjugate formation." evidence="6">
    <original>K</original>
    <variation>R</variation>
    <location>
        <position position="29"/>
    </location>
</feature>
<feature type="mutagenesis site" description="Deficiency in ubiquitin-protein conjugate formation." evidence="6">
    <original>K</original>
    <variation>R</variation>
    <location>
        <position position="48"/>
    </location>
</feature>
<feature type="mutagenesis site" description="Deficiency in ubiquitin-protein conjugate formation. Loss of DNA repair function." evidence="6">
    <original>K</original>
    <variation>R</variation>
    <location>
        <position position="63"/>
    </location>
</feature>
<name>RL40B_YEAST</name>
<accession>P0CH09</accession>
<accession>D6VVD9</accession>
<accession>P04838</accession>
<accession>P14796</accession>
<accession>P61864</accession>
<accession>Q6LA96</accession>
<reference key="1">
    <citation type="journal article" date="1987" name="EMBO J.">
        <title>The yeast ubiquitin genes: a family of natural gene fusions.</title>
        <authorList>
            <person name="Oezkaynak E."/>
            <person name="Finley D."/>
            <person name="Solomon M.J."/>
            <person name="Varshavsky A."/>
        </authorList>
    </citation>
    <scope>NUCLEOTIDE SEQUENCE [GENOMIC DNA]</scope>
</reference>
<reference key="2">
    <citation type="journal article" date="1993" name="Yeast">
        <title>The complete sequence of a 15,820 bp segment of Saccharomyces cerevisiae chromosome XI contains the UBI2 and MPL1 genes and three new open reading frames.</title>
        <authorList>
            <person name="Bou G."/>
            <person name="Esteban P.F."/>
            <person name="Baladron V."/>
            <person name="Gonzalez G.A."/>
            <person name="Cantalejo J.G."/>
            <person name="Remacha M.A."/>
            <person name="Jimenez A."/>
            <person name="del Rey F."/>
            <person name="Ballesta J.P.G."/>
            <person name="Revuelta J.L."/>
        </authorList>
    </citation>
    <scope>NUCLEOTIDE SEQUENCE [GENOMIC DNA]</scope>
</reference>
<reference key="3">
    <citation type="journal article" date="1994" name="Nature">
        <title>Complete DNA sequence of yeast chromosome XI.</title>
        <authorList>
            <person name="Dujon B."/>
            <person name="Alexandraki D."/>
            <person name="Andre B."/>
            <person name="Ansorge W."/>
            <person name="Baladron V."/>
            <person name="Ballesta J.P.G."/>
            <person name="Banrevi A."/>
            <person name="Bolle P.-A."/>
            <person name="Bolotin-Fukuhara M."/>
            <person name="Bossier P."/>
            <person name="Bou G."/>
            <person name="Boyer J."/>
            <person name="Buitrago M.J."/>
            <person name="Cheret G."/>
            <person name="Colleaux L."/>
            <person name="Daignan-Fornier B."/>
            <person name="del Rey F."/>
            <person name="Dion C."/>
            <person name="Domdey H."/>
            <person name="Duesterhoeft A."/>
            <person name="Duesterhus S."/>
            <person name="Entian K.-D."/>
            <person name="Erfle H."/>
            <person name="Esteban P.F."/>
            <person name="Feldmann H."/>
            <person name="Fernandes L."/>
            <person name="Fobo G.M."/>
            <person name="Fritz C."/>
            <person name="Fukuhara H."/>
            <person name="Gabel C."/>
            <person name="Gaillon L."/>
            <person name="Garcia-Cantalejo J.M."/>
            <person name="Garcia-Ramirez J.J."/>
            <person name="Gent M.E."/>
            <person name="Ghazvini M."/>
            <person name="Goffeau A."/>
            <person name="Gonzalez A."/>
            <person name="Grothues D."/>
            <person name="Guerreiro P."/>
            <person name="Hegemann J.H."/>
            <person name="Hewitt N."/>
            <person name="Hilger F."/>
            <person name="Hollenberg C.P."/>
            <person name="Horaitis O."/>
            <person name="Indge K.J."/>
            <person name="Jacquier A."/>
            <person name="James C.M."/>
            <person name="Jauniaux J.-C."/>
            <person name="Jimenez A."/>
            <person name="Keuchel H."/>
            <person name="Kirchrath L."/>
            <person name="Kleine K."/>
            <person name="Koetter P."/>
            <person name="Legrain P."/>
            <person name="Liebl S."/>
            <person name="Louis E.J."/>
            <person name="Maia e Silva A."/>
            <person name="Marck C."/>
            <person name="Monnier A.-L."/>
            <person name="Moestl D."/>
            <person name="Mueller S."/>
            <person name="Obermaier B."/>
            <person name="Oliver S.G."/>
            <person name="Pallier C."/>
            <person name="Pascolo S."/>
            <person name="Pfeiffer F."/>
            <person name="Philippsen P."/>
            <person name="Planta R.J."/>
            <person name="Pohl F.M."/>
            <person name="Pohl T.M."/>
            <person name="Poehlmann R."/>
            <person name="Portetelle D."/>
            <person name="Purnelle B."/>
            <person name="Puzos V."/>
            <person name="Ramezani Rad M."/>
            <person name="Rasmussen S.W."/>
            <person name="Remacha M.A."/>
            <person name="Revuelta J.L."/>
            <person name="Richard G.-F."/>
            <person name="Rieger M."/>
            <person name="Rodrigues-Pousada C."/>
            <person name="Rose M."/>
            <person name="Rupp T."/>
            <person name="Santos M.A."/>
            <person name="Schwager C."/>
            <person name="Sensen C."/>
            <person name="Skala J."/>
            <person name="Soares H."/>
            <person name="Sor F."/>
            <person name="Stegemann J."/>
            <person name="Tettelin H."/>
            <person name="Thierry A."/>
            <person name="Tzermia M."/>
            <person name="Urrestarazu L.A."/>
            <person name="van Dyck L."/>
            <person name="van Vliet-Reedijk J.C."/>
            <person name="Valens M."/>
            <person name="Vandenbol M."/>
            <person name="Vilela C."/>
            <person name="Vissers S."/>
            <person name="von Wettstein D."/>
            <person name="Voss H."/>
            <person name="Wiemann S."/>
            <person name="Xu G."/>
            <person name="Zimmermann J."/>
            <person name="Haasemann M."/>
            <person name="Becker I."/>
            <person name="Mewes H.-W."/>
        </authorList>
    </citation>
    <scope>NUCLEOTIDE SEQUENCE [LARGE SCALE GENOMIC DNA]</scope>
    <source>
        <strain>ATCC 204508 / S288c</strain>
    </source>
</reference>
<reference key="4">
    <citation type="journal article" date="2014" name="G3 (Bethesda)">
        <title>The reference genome sequence of Saccharomyces cerevisiae: Then and now.</title>
        <authorList>
            <person name="Engel S.R."/>
            <person name="Dietrich F.S."/>
            <person name="Fisk D.G."/>
            <person name="Binkley G."/>
            <person name="Balakrishnan R."/>
            <person name="Costanzo M.C."/>
            <person name="Dwight S.S."/>
            <person name="Hitz B.C."/>
            <person name="Karra K."/>
            <person name="Nash R.S."/>
            <person name="Weng S."/>
            <person name="Wong E.D."/>
            <person name="Lloyd P."/>
            <person name="Skrzypek M.S."/>
            <person name="Miyasato S.R."/>
            <person name="Simison M."/>
            <person name="Cherry J.M."/>
        </authorList>
    </citation>
    <scope>GENOME REANNOTATION</scope>
    <source>
        <strain>ATCC 204508 / S288c</strain>
    </source>
</reference>
<reference key="5">
    <citation type="journal article" date="1995" name="J. Biol. Chem.">
        <title>A proteolytic pathway that recognizes ubiquitin as a degradation signal.</title>
        <authorList>
            <person name="Johnson E.S."/>
            <person name="Ma P.C.M."/>
            <person name="Ota I.M."/>
            <person name="Varshavsky A."/>
        </authorList>
    </citation>
    <scope>MUTAGENESIS OF LYS-29; LYS-48 AND LYS-63</scope>
</reference>
<reference key="6">
    <citation type="journal article" date="1995" name="Mol. Cell. Biol.">
        <title>A ubiquitin mutant with specific defects in DNA repair and multiubiquitination.</title>
        <authorList>
            <person name="Spence J."/>
            <person name="Sadis S."/>
            <person name="Haas A.L."/>
            <person name="Finley D."/>
        </authorList>
    </citation>
    <scope>MUTAGENESIS OF LYSINE RESIDUES IN UBIQUITIN</scope>
</reference>
<reference key="7">
    <citation type="journal article" date="1998" name="Yeast">
        <title>The list of cytoplasmic ribosomal proteins of Saccharomyces cerevisiae.</title>
        <authorList>
            <person name="Planta R.J."/>
            <person name="Mager W.H."/>
        </authorList>
    </citation>
    <scope>NOMENCLATURE</scope>
    <scope>SUBUNIT (L40)</scope>
</reference>
<reference key="8">
    <citation type="journal article" date="2003" name="Nature">
        <title>Global analysis of protein localization in budding yeast.</title>
        <authorList>
            <person name="Huh W.-K."/>
            <person name="Falvo J.V."/>
            <person name="Gerke L.C."/>
            <person name="Carroll A.S."/>
            <person name="Howson R.W."/>
            <person name="Weissman J.S."/>
            <person name="O'Shea E.K."/>
        </authorList>
    </citation>
    <scope>SUBCELLULAR LOCATION [LARGE SCALE ANALYSIS] (L40)</scope>
</reference>
<reference key="9">
    <citation type="journal article" date="2003" name="Nature">
        <title>Global analysis of protein expression in yeast.</title>
        <authorList>
            <person name="Ghaemmaghami S."/>
            <person name="Huh W.-K."/>
            <person name="Bower K."/>
            <person name="Howson R.W."/>
            <person name="Belle A."/>
            <person name="Dephoure N."/>
            <person name="O'Shea E.K."/>
            <person name="Weissman J.S."/>
        </authorList>
    </citation>
    <scope>LEVEL OF PROTEIN EXPRESSION [LARGE SCALE ANALYSIS] (L40)</scope>
</reference>
<reference key="10">
    <citation type="journal article" date="2011" name="Science">
        <title>The structure of the eukaryotic ribosome at 3.0 A resolution.</title>
        <authorList>
            <person name="Ben-Shem A."/>
            <person name="Garreau de Loubresse N."/>
            <person name="Melnikov S."/>
            <person name="Jenner L."/>
            <person name="Yusupova G."/>
            <person name="Yusupov M."/>
        </authorList>
    </citation>
    <scope>SUBUNIT</scope>
    <scope>SUBCELLULAR LOCATION</scope>
</reference>
<reference key="11">
    <citation type="journal article" date="2012" name="Proc. Natl. Acad. Sci. U.S.A.">
        <title>N-terminal acetylome analyses and functional insights of the N-terminal acetyltransferase NatB.</title>
        <authorList>
            <person name="Van Damme P."/>
            <person name="Lasa M."/>
            <person name="Polevoda B."/>
            <person name="Gazquez C."/>
            <person name="Elosegui-Artola A."/>
            <person name="Kim D.S."/>
            <person name="De Juan-Pardo E."/>
            <person name="Demeyer K."/>
            <person name="Hole K."/>
            <person name="Larrea E."/>
            <person name="Timmerman E."/>
            <person name="Prieto J."/>
            <person name="Arnesen T."/>
            <person name="Sherman F."/>
            <person name="Gevaert K."/>
            <person name="Aldabe R."/>
        </authorList>
    </citation>
    <scope>IDENTIFICATION BY MASS SPECTROMETRY [LARGE SCALE ANALYSIS]</scope>
</reference>
<reference key="12">
    <citation type="journal article" date="2012" name="Proteomics">
        <title>Sites of ubiquitin attachment in Saccharomyces cerevisiae.</title>
        <authorList>
            <person name="Starita L.M."/>
            <person name="Lo R.S."/>
            <person name="Eng J.K."/>
            <person name="von Haller P.D."/>
            <person name="Fields S."/>
        </authorList>
    </citation>
    <scope>UBIQUITINATION [LARGE SCALE ANALYSIS] AT LYS-93</scope>
    <scope>IDENTIFICATION BY MASS SPECTROMETRY [LARGE SCALE ANALYSIS]</scope>
</reference>
<reference key="13">
    <citation type="journal article" date="2013" name="Proc. Natl. Acad. Sci. U.S.A.">
        <title>A ribosome-specialized translation initiation pathway is required for cap-dependent translation of vesicular stomatitis virus mRNAs.</title>
        <authorList>
            <person name="Lee A.S."/>
            <person name="Burdeinick-Kerr R."/>
            <person name="Whelan S.P."/>
        </authorList>
    </citation>
    <scope>FUNCTION</scope>
    <scope>SUBUNIT</scope>
</reference>
<reference key="14">
    <citation type="journal article" date="2014" name="Curr. Opin. Struct. Biol.">
        <title>A new system for naming ribosomal proteins.</title>
        <authorList>
            <person name="Ban N."/>
            <person name="Beckmann R."/>
            <person name="Cate J.H.D."/>
            <person name="Dinman J.D."/>
            <person name="Dragon F."/>
            <person name="Ellis S.R."/>
            <person name="Lafontaine D.L.J."/>
            <person name="Lindahl L."/>
            <person name="Liljas A."/>
            <person name="Lipton J.M."/>
            <person name="McAlear M.A."/>
            <person name="Moore P.B."/>
            <person name="Noller H.F."/>
            <person name="Ortega J."/>
            <person name="Panse V.G."/>
            <person name="Ramakrishnan V."/>
            <person name="Spahn C.M.T."/>
            <person name="Steitz T.A."/>
            <person name="Tchorzewski M."/>
            <person name="Tollervey D."/>
            <person name="Warren A.J."/>
            <person name="Williamson J.R."/>
            <person name="Wilson D."/>
            <person name="Yonath A."/>
            <person name="Yusupov M."/>
        </authorList>
    </citation>
    <scope>NOMENCLATURE</scope>
</reference>
<organism>
    <name type="scientific">Saccharomyces cerevisiae (strain ATCC 204508 / S288c)</name>
    <name type="common">Baker's yeast</name>
    <dbReference type="NCBI Taxonomy" id="559292"/>
    <lineage>
        <taxon>Eukaryota</taxon>
        <taxon>Fungi</taxon>
        <taxon>Dikarya</taxon>
        <taxon>Ascomycota</taxon>
        <taxon>Saccharomycotina</taxon>
        <taxon>Saccharomycetes</taxon>
        <taxon>Saccharomycetales</taxon>
        <taxon>Saccharomycetaceae</taxon>
        <taxon>Saccharomyces</taxon>
    </lineage>
</organism>
<gene>
    <name evidence="8" type="primary">RPL40B</name>
    <name type="synonym">UBI2</name>
    <name type="ordered locus">YKR094C</name>
</gene>
<keyword id="KW-0002">3D-structure</keyword>
<keyword id="KW-0963">Cytoplasm</keyword>
<keyword id="KW-1017">Isopeptide bond</keyword>
<keyword id="KW-0539">Nucleus</keyword>
<keyword id="KW-1185">Reference proteome</keyword>
<keyword id="KW-0687">Ribonucleoprotein</keyword>
<keyword id="KW-0689">Ribosomal protein</keyword>
<keyword id="KW-0832">Ubl conjugation</keyword>
<protein>
    <recommendedName>
        <fullName evidence="9">Ubiquitin-ribosomal protein eL40B fusion protein</fullName>
    </recommendedName>
    <component>
        <recommendedName>
            <fullName>Ubiquitin</fullName>
        </recommendedName>
    </component>
    <component>
        <recommendedName>
            <fullName evidence="7">Large ribosomal subunit protein eL40B</fullName>
        </recommendedName>
        <alternativeName>
            <fullName evidence="8">60S ribosomal protein L40-B</fullName>
        </alternativeName>
        <alternativeName>
            <fullName>CEP52</fullName>
        </alternativeName>
    </component>
</protein>
<evidence type="ECO:0000250" key="1"/>
<evidence type="ECO:0000255" key="2">
    <source>
        <dbReference type="PROSITE-ProRule" id="PRU00214"/>
    </source>
</evidence>
<evidence type="ECO:0000269" key="3">
    <source>
    </source>
</evidence>
<evidence type="ECO:0000269" key="4">
    <source>
    </source>
</evidence>
<evidence type="ECO:0000269" key="5">
    <source>
    </source>
</evidence>
<evidence type="ECO:0000269" key="6">
    <source>
    </source>
</evidence>
<evidence type="ECO:0000303" key="7">
    <source>
    </source>
</evidence>
<evidence type="ECO:0000303" key="8">
    <source>
    </source>
</evidence>
<evidence type="ECO:0000305" key="9"/>
<evidence type="ECO:0000305" key="10">
    <source>
    </source>
</evidence>
<evidence type="ECO:0000305" key="11">
    <source>
    </source>
</evidence>
<evidence type="ECO:0000305" key="12">
    <source>
    </source>
</evidence>
<evidence type="ECO:0007744" key="13">
    <source>
    </source>
</evidence>
<proteinExistence type="evidence at protein level"/>
<dbReference type="EMBL" id="X73541">
    <property type="protein sequence ID" value="CAA51949.1"/>
    <property type="molecule type" value="Genomic_DNA"/>
</dbReference>
<dbReference type="EMBL" id="Z28319">
    <property type="protein sequence ID" value="CAA82173.1"/>
    <property type="molecule type" value="Genomic_DNA"/>
</dbReference>
<dbReference type="EMBL" id="BK006944">
    <property type="protein sequence ID" value="DAA09244.1"/>
    <property type="molecule type" value="Genomic_DNA"/>
</dbReference>
<dbReference type="PIR" id="A29456">
    <property type="entry name" value="A29456"/>
</dbReference>
<dbReference type="RefSeq" id="NP_013020.3">
    <property type="nucleotide sequence ID" value="NM_001179884.3"/>
</dbReference>
<dbReference type="PDB" id="4V91">
    <property type="method" value="EM"/>
    <property type="resolution" value="3.70 A"/>
    <property type="chains" value="m=1-128"/>
</dbReference>
<dbReference type="PDB" id="6NZO">
    <property type="method" value="EM"/>
    <property type="resolution" value="3.80 A"/>
    <property type="chains" value="C/G=1-75"/>
</dbReference>
<dbReference type="PDB" id="6PX1">
    <property type="method" value="EM"/>
    <property type="resolution" value="3.30 A"/>
    <property type="chains" value="C/G=1-75"/>
</dbReference>
<dbReference type="PDB" id="6PX3">
    <property type="method" value="EM"/>
    <property type="resolution" value="4.10 A"/>
    <property type="chains" value="C/G=1-75"/>
</dbReference>
<dbReference type="PDBsum" id="4V91"/>
<dbReference type="PDBsum" id="6NZO"/>
<dbReference type="PDBsum" id="6PX1"/>
<dbReference type="PDBsum" id="6PX3"/>
<dbReference type="SMR" id="P0CH09"/>
<dbReference type="BioGRID" id="34225">
    <property type="interactions" value="399"/>
</dbReference>
<dbReference type="BioGRID" id="34844">
    <property type="interactions" value="223"/>
</dbReference>
<dbReference type="FunCoup" id="P0CH09">
    <property type="interactions" value="1147"/>
</dbReference>
<dbReference type="iPTMnet" id="P0CH09"/>
<dbReference type="TopDownProteomics" id="P0CH09"/>
<dbReference type="EnsemblFungi" id="YIL148W_mRNA">
    <property type="protein sequence ID" value="YIL148W"/>
    <property type="gene ID" value="YIL148W"/>
</dbReference>
<dbReference type="EnsemblFungi" id="YKR094C_mRNA">
    <property type="protein sequence ID" value="YKR094C"/>
    <property type="gene ID" value="YKR094C"/>
</dbReference>
<dbReference type="GeneID" id="853969"/>
<dbReference type="KEGG" id="sce:YIL148W"/>
<dbReference type="KEGG" id="sce:YKR094C"/>
<dbReference type="AGR" id="SGD:S000001802"/>
<dbReference type="SGD" id="S000001802">
    <property type="gene designation" value="RPL40B"/>
</dbReference>
<dbReference type="VEuPathDB" id="FungiDB:YIL148W"/>
<dbReference type="VEuPathDB" id="FungiDB:YKR094C"/>
<dbReference type="GeneTree" id="ENSGT00940000153593"/>
<dbReference type="HOGENOM" id="CLU_010412_3_4_1"/>
<dbReference type="InParanoid" id="P0CH09"/>
<dbReference type="OMA" id="CGRCSQL"/>
<dbReference type="OrthoDB" id="428577at2759"/>
<dbReference type="BioCyc" id="YEAST:G3O-32057-MONOMER"/>
<dbReference type="BioGRID-ORCS" id="853969">
    <property type="hits" value="0 hits in 10 CRISPR screens"/>
</dbReference>
<dbReference type="BioGRID-ORCS" id="854658">
    <property type="hits" value="1 hit in 10 CRISPR screens"/>
</dbReference>
<dbReference type="PRO" id="PR:P0CH09"/>
<dbReference type="Proteomes" id="UP000002311">
    <property type="component" value="Chromosome XI"/>
</dbReference>
<dbReference type="RNAct" id="P0CH09">
    <property type="molecule type" value="protein"/>
</dbReference>
<dbReference type="ExpressionAtlas" id="P0CH09">
    <property type="expression patterns" value="baseline and differential"/>
</dbReference>
<dbReference type="GO" id="GO:0005737">
    <property type="term" value="C:cytoplasm"/>
    <property type="evidence" value="ECO:0000318"/>
    <property type="project" value="GO_Central"/>
</dbReference>
<dbReference type="GO" id="GO:0005829">
    <property type="term" value="C:cytosol"/>
    <property type="evidence" value="ECO:0000304"/>
    <property type="project" value="Reactome"/>
</dbReference>
<dbReference type="GO" id="GO:0022625">
    <property type="term" value="C:cytosolic large ribosomal subunit"/>
    <property type="evidence" value="ECO:0000314"/>
    <property type="project" value="SGD"/>
</dbReference>
<dbReference type="GO" id="GO:0005739">
    <property type="term" value="C:mitochondrion"/>
    <property type="evidence" value="ECO:0007005"/>
    <property type="project" value="SGD"/>
</dbReference>
<dbReference type="GO" id="GO:0005634">
    <property type="term" value="C:nucleus"/>
    <property type="evidence" value="ECO:0000318"/>
    <property type="project" value="GO_Central"/>
</dbReference>
<dbReference type="GO" id="GO:0031386">
    <property type="term" value="F:protein tag activity"/>
    <property type="evidence" value="ECO:0000250"/>
    <property type="project" value="SGD"/>
</dbReference>
<dbReference type="GO" id="GO:0003735">
    <property type="term" value="F:structural constituent of ribosome"/>
    <property type="evidence" value="ECO:0000305"/>
    <property type="project" value="SGD"/>
</dbReference>
<dbReference type="GO" id="GO:0031625">
    <property type="term" value="F:ubiquitin protein ligase binding"/>
    <property type="evidence" value="ECO:0000318"/>
    <property type="project" value="GO_Central"/>
</dbReference>
<dbReference type="GO" id="GO:0002181">
    <property type="term" value="P:cytoplasmic translation"/>
    <property type="evidence" value="ECO:0000305"/>
    <property type="project" value="SGD"/>
</dbReference>
<dbReference type="GO" id="GO:0019941">
    <property type="term" value="P:modification-dependent protein catabolic process"/>
    <property type="evidence" value="ECO:0000318"/>
    <property type="project" value="GO_Central"/>
</dbReference>
<dbReference type="GO" id="GO:0016567">
    <property type="term" value="P:protein ubiquitination"/>
    <property type="evidence" value="ECO:0000315"/>
    <property type="project" value="SGD"/>
</dbReference>
<dbReference type="GO" id="GO:0000027">
    <property type="term" value="P:ribosomal large subunit assembly"/>
    <property type="evidence" value="ECO:0000315"/>
    <property type="project" value="SGD"/>
</dbReference>
<dbReference type="GO" id="GO:0000055">
    <property type="term" value="P:ribosomal large subunit export from nucleus"/>
    <property type="evidence" value="ECO:0000315"/>
    <property type="project" value="SGD"/>
</dbReference>
<dbReference type="GO" id="GO:0042254">
    <property type="term" value="P:ribosome biogenesis"/>
    <property type="evidence" value="ECO:0000314"/>
    <property type="project" value="SGD"/>
</dbReference>
<dbReference type="CDD" id="cd01803">
    <property type="entry name" value="Ubl_ubiquitin"/>
    <property type="match status" value="1"/>
</dbReference>
<dbReference type="FunFam" id="3.10.20.90:FF:000014">
    <property type="entry name" value="Ubiquitin-60S ribosomal L40 fusion"/>
    <property type="match status" value="1"/>
</dbReference>
<dbReference type="FunFam" id="4.10.1060.50:FF:000001">
    <property type="entry name" value="ubiquitin-60S ribosomal protein L40"/>
    <property type="match status" value="1"/>
</dbReference>
<dbReference type="Gene3D" id="4.10.1060.50">
    <property type="match status" value="1"/>
</dbReference>
<dbReference type="Gene3D" id="3.10.20.90">
    <property type="entry name" value="Phosphatidylinositol 3-kinase Catalytic Subunit, Chain A, domain 1"/>
    <property type="match status" value="1"/>
</dbReference>
<dbReference type="InterPro" id="IPR001975">
    <property type="entry name" value="Ribosomal_eL40_dom"/>
</dbReference>
<dbReference type="InterPro" id="IPR038587">
    <property type="entry name" value="Ribosomal_eL40_sf"/>
</dbReference>
<dbReference type="InterPro" id="IPR000626">
    <property type="entry name" value="Ubiquitin-like_dom"/>
</dbReference>
<dbReference type="InterPro" id="IPR029071">
    <property type="entry name" value="Ubiquitin-like_domsf"/>
</dbReference>
<dbReference type="InterPro" id="IPR019954">
    <property type="entry name" value="Ubiquitin_CS"/>
</dbReference>
<dbReference type="InterPro" id="IPR019956">
    <property type="entry name" value="Ubiquitin_dom"/>
</dbReference>
<dbReference type="InterPro" id="IPR050158">
    <property type="entry name" value="Ubiquitin_ubiquitin-like"/>
</dbReference>
<dbReference type="PANTHER" id="PTHR10666">
    <property type="entry name" value="UBIQUITIN"/>
    <property type="match status" value="1"/>
</dbReference>
<dbReference type="Pfam" id="PF01020">
    <property type="entry name" value="Ribosomal_L40e"/>
    <property type="match status" value="1"/>
</dbReference>
<dbReference type="Pfam" id="PF00240">
    <property type="entry name" value="ubiquitin"/>
    <property type="match status" value="1"/>
</dbReference>
<dbReference type="PRINTS" id="PR00348">
    <property type="entry name" value="UBIQUITIN"/>
</dbReference>
<dbReference type="SMART" id="SM01377">
    <property type="entry name" value="Ribosomal_L40e"/>
    <property type="match status" value="1"/>
</dbReference>
<dbReference type="SMART" id="SM00213">
    <property type="entry name" value="UBQ"/>
    <property type="match status" value="1"/>
</dbReference>
<dbReference type="SUPFAM" id="SSF54236">
    <property type="entry name" value="Ubiquitin-like"/>
    <property type="match status" value="1"/>
</dbReference>
<dbReference type="PROSITE" id="PS00299">
    <property type="entry name" value="UBIQUITIN_1"/>
    <property type="match status" value="1"/>
</dbReference>
<dbReference type="PROSITE" id="PS50053">
    <property type="entry name" value="UBIQUITIN_2"/>
    <property type="match status" value="1"/>
</dbReference>
<sequence length="128" mass="14554">MQIFVKTLTGKTITLEVESSDTIDNVKSKIQDKEGIPPDQQRLIFAGKQLEDGRTLSDYNIQKESTLHLVLRLRGGIIEPSLKALASKYNCDKSVCRKCYARLPPRATNCRKRKCGHTNQLRPKKKLK</sequence>
<comment type="function">
    <molecule>Ubiquitin</molecule>
    <text evidence="1">Exists either covalently attached to another protein, or free (unanchored). When covalently bound, it is conjugated to target proteins via an isopeptide bond either as a monomer (monoubiquitin), a polymer linked via different Lys residues of the ubiquitin (polyubiquitin chains) or a linear polymer linked via the initiator Met of the ubiquitin (linear polyubiquitin chains). Polyubiquitin chains, when attached to a target protein, have different functions depending on the Lys residue of the ubiquitin that is linked: Lys-6-linked may be involved in DNA repair; Lys-11-linked is involved in ERAD (endoplasmic reticulum-associated degradation) and in cell-cycle regulation; Lys-29-linked is involved in lysosomal degradation; Lys-33-linked is involved in kinase modification; Lys-48-linked is involved in protein degradation via the proteasome; Lys-63-linked is involved in endocytosis, and DNA-damage responses. Linear polymer chains formed via attachment by the initiator Met lead to cell signaling. Ubiquitin is usually conjugated to Lys residues of target proteins, however, in rare cases, conjugation to Cys or Ser residues has been observed. When polyubiquitin is free (unanchored-polyubiquitin), it also has distinct roles, such as in activation of protein kinases, and in signaling (By similarity).</text>
</comment>
<comment type="function">
    <molecule>Large ribosomal subunit protein eL40B</molecule>
    <text evidence="5 10">Component of the ribosome, a large ribonucleoprotein complex responsible for the synthesis of proteins in the cell. The small ribosomal subunit (SSU) binds messenger RNAs (mRNAs) and translates the encoded message by selecting cognate aminoacyl-transfer RNA (tRNA) molecules. The large subunit (LSU) contains the ribosomal catalytic site termed the peptidyl transferase center (PTC), which catalyzes the formation of peptide bonds, thereby polymerizing the amino acids delivered by tRNAs into a polypeptide chain. The nascent polypeptides leave the ribosome through a tunnel in the LSU and interact with protein factors that function in enzymatic processing, targeting, and the membrane insertion of nascent chains at the exit of the ribosomal tunnel (PubMed:22096102). eL40 is essential for translation of a subset of cellular transcripts, including stress response transcripts, such as DDR2 (PubMed:23169626).</text>
</comment>
<comment type="subunit">
    <molecule>Large ribosomal subunit protein eL40B</molecule>
    <text evidence="4 12">Component of the large ribosomal subunit (LSU). Mature yeast ribosomes consist of a small (40S) and a large (60S) subunit. The 40S small subunit contains 1 molecule of ribosomal RNA (18S rRNA) and 33 different proteins (encoded by 57 genes). The large 60S subunit contains 3 rRNA molecules (25S, 5.8S and 5S rRNA) and 46 different proteins (encoded by 81 genes) (PubMed:22096102, PubMed:9559554).</text>
</comment>
<comment type="subcellular location">
    <molecule>Ubiquitin</molecule>
    <subcellularLocation>
        <location evidence="1">Cytoplasm</location>
    </subcellularLocation>
    <subcellularLocation>
        <location evidence="1">Nucleus</location>
    </subcellularLocation>
</comment>
<comment type="subcellular location">
    <molecule>Large ribosomal subunit protein eL40B</molecule>
    <subcellularLocation>
        <location evidence="4">Cytoplasm</location>
    </subcellularLocation>
</comment>
<comment type="miscellaneous">
    <text evidence="11">Ubiquitin is encoded by several different genes. UBI1 and UBI2 genes code for a single copy of ubiquitin fused to the ribosomal proteins eL40A and eL40B, respectively. UBI3 is a polyprotein with one copy of ubiquitin fused to ribosomal protein eS31. UBI4 is a polyprotein containing 5 exact head to tail repeats of ubiquitin.</text>
</comment>
<comment type="miscellaneous">
    <text evidence="3">The 60S ribosomal protein L40 is present with 40000 molecules/cell in log phase SD medium.</text>
</comment>
<comment type="similarity">
    <text evidence="9">In the N-terminal section; belongs to the ubiquitin family.</text>
</comment>
<comment type="similarity">
    <text evidence="9">In the C-terminal section; belongs to the eukaryotic ribosomal protein eL40 family.</text>
</comment>